<evidence type="ECO:0000255" key="1">
    <source>
        <dbReference type="HAMAP-Rule" id="MF_00054"/>
    </source>
</evidence>
<organism>
    <name type="scientific">Rhizobium leguminosarum bv. trifolii (strain WSM2304)</name>
    <dbReference type="NCBI Taxonomy" id="395492"/>
    <lineage>
        <taxon>Bacteria</taxon>
        <taxon>Pseudomonadati</taxon>
        <taxon>Pseudomonadota</taxon>
        <taxon>Alphaproteobacteria</taxon>
        <taxon>Hyphomicrobiales</taxon>
        <taxon>Rhizobiaceae</taxon>
        <taxon>Rhizobium/Agrobacterium group</taxon>
        <taxon>Rhizobium</taxon>
    </lineage>
</organism>
<keyword id="KW-0963">Cytoplasm</keyword>
<keyword id="KW-0251">Elongation factor</keyword>
<keyword id="KW-0342">GTP-binding</keyword>
<keyword id="KW-0547">Nucleotide-binding</keyword>
<keyword id="KW-0648">Protein biosynthesis</keyword>
<keyword id="KW-1185">Reference proteome</keyword>
<sequence>MAREYKIEDYRNFGIMAHIDAGKTTTTERILYYTGKSHKIGEVHDGAATMDWMEQEQERGITITSAATTTFWKGRDGKTRRFNIIDTPGHVDFTIEVERSLRVLDGAIALLDANAGVEPQTETVWRQAEKYNVPRMIFCNKMDKTGADFYRSVEMIKTRLGATAVVMQLPIGAETEFKGVIDLIEMNALIWRDESLGAQWDVVEIPEDMKAKAEEYREKLIETVVDIDEAAMEAYLEGILPDNDQIRALVRRGTIDVKFHPMFCGTAFKNKGVQPLLDAVVDYLPSPMDIPAIKGIDFKTEADIERHADDAEPLSMLAFKIMNDPFVGSLTFARIYSGKLEKGASVMNTVKDKRERVGRMLQMHSNSREDIEEAFAGDIVALAGLKETTTGDTLCDPLKPVILERMEFPEPVIQIAIEPKTKGDQEKMGLALNRLAAEDPSFRVKTDQESGQTIIAGMGELHLDIIVDRMRREFKVEATVGAPQVAYRETITRQHEEDYTHKKQSGGTGQFARVKIVFEPNPEGDDFKFESKIVGGSVPKEYIPGVQKGIESVLSSGPLAGFPMLGVKATLIDGAFHDVDSSVLAFEIASRACFREAAKKAGAQLLEPMMKVEVVTPEDYVGDVIGDLNSRRGQIQGQESRGIAVVINANVPLANMFKYVDNLRSMSQGRAQYTMTFDHYSPVPSNVATEIQAKYSGQK</sequence>
<gene>
    <name evidence="1" type="primary">fusA</name>
    <name type="ordered locus">Rleg2_1329</name>
</gene>
<accession>B5ZYT2</accession>
<feature type="chain" id="PRO_1000091752" description="Elongation factor G">
    <location>
        <begin position="1"/>
        <end position="699"/>
    </location>
</feature>
<feature type="domain" description="tr-type G">
    <location>
        <begin position="8"/>
        <end position="288"/>
    </location>
</feature>
<feature type="binding site" evidence="1">
    <location>
        <begin position="17"/>
        <end position="24"/>
    </location>
    <ligand>
        <name>GTP</name>
        <dbReference type="ChEBI" id="CHEBI:37565"/>
    </ligand>
</feature>
<feature type="binding site" evidence="1">
    <location>
        <begin position="86"/>
        <end position="90"/>
    </location>
    <ligand>
        <name>GTP</name>
        <dbReference type="ChEBI" id="CHEBI:37565"/>
    </ligand>
</feature>
<feature type="binding site" evidence="1">
    <location>
        <begin position="140"/>
        <end position="143"/>
    </location>
    <ligand>
        <name>GTP</name>
        <dbReference type="ChEBI" id="CHEBI:37565"/>
    </ligand>
</feature>
<name>EFG_RHILW</name>
<reference key="1">
    <citation type="journal article" date="2010" name="Stand. Genomic Sci.">
        <title>Complete genome sequence of Rhizobium leguminosarum bv trifolii strain WSM2304, an effective microsymbiont of the South American clover Trifolium polymorphum.</title>
        <authorList>
            <person name="Reeve W."/>
            <person name="O'Hara G."/>
            <person name="Chain P."/>
            <person name="Ardley J."/>
            <person name="Brau L."/>
            <person name="Nandesena K."/>
            <person name="Tiwari R."/>
            <person name="Malfatti S."/>
            <person name="Kiss H."/>
            <person name="Lapidus A."/>
            <person name="Copeland A."/>
            <person name="Nolan M."/>
            <person name="Land M."/>
            <person name="Ivanova N."/>
            <person name="Mavromatis K."/>
            <person name="Markowitz V."/>
            <person name="Kyrpides N."/>
            <person name="Melino V."/>
            <person name="Denton M."/>
            <person name="Yates R."/>
            <person name="Howieson J."/>
        </authorList>
    </citation>
    <scope>NUCLEOTIDE SEQUENCE [LARGE SCALE GENOMIC DNA]</scope>
    <source>
        <strain>WSM2304</strain>
    </source>
</reference>
<protein>
    <recommendedName>
        <fullName evidence="1">Elongation factor G</fullName>
        <shortName evidence="1">EF-G</shortName>
    </recommendedName>
</protein>
<dbReference type="EMBL" id="CP001191">
    <property type="protein sequence ID" value="ACI54623.1"/>
    <property type="molecule type" value="Genomic_DNA"/>
</dbReference>
<dbReference type="RefSeq" id="WP_003587199.1">
    <property type="nucleotide sequence ID" value="NC_011369.1"/>
</dbReference>
<dbReference type="SMR" id="B5ZYT2"/>
<dbReference type="STRING" id="395492.Rleg2_1329"/>
<dbReference type="KEGG" id="rlt:Rleg2_1329"/>
<dbReference type="eggNOG" id="COG0480">
    <property type="taxonomic scope" value="Bacteria"/>
</dbReference>
<dbReference type="HOGENOM" id="CLU_002794_4_1_5"/>
<dbReference type="Proteomes" id="UP000008330">
    <property type="component" value="Chromosome"/>
</dbReference>
<dbReference type="GO" id="GO:0005737">
    <property type="term" value="C:cytoplasm"/>
    <property type="evidence" value="ECO:0007669"/>
    <property type="project" value="UniProtKB-SubCell"/>
</dbReference>
<dbReference type="GO" id="GO:0005525">
    <property type="term" value="F:GTP binding"/>
    <property type="evidence" value="ECO:0007669"/>
    <property type="project" value="UniProtKB-UniRule"/>
</dbReference>
<dbReference type="GO" id="GO:0003924">
    <property type="term" value="F:GTPase activity"/>
    <property type="evidence" value="ECO:0007669"/>
    <property type="project" value="InterPro"/>
</dbReference>
<dbReference type="GO" id="GO:0003746">
    <property type="term" value="F:translation elongation factor activity"/>
    <property type="evidence" value="ECO:0007669"/>
    <property type="project" value="UniProtKB-UniRule"/>
</dbReference>
<dbReference type="GO" id="GO:0032790">
    <property type="term" value="P:ribosome disassembly"/>
    <property type="evidence" value="ECO:0007669"/>
    <property type="project" value="TreeGrafter"/>
</dbReference>
<dbReference type="CDD" id="cd01886">
    <property type="entry name" value="EF-G"/>
    <property type="match status" value="1"/>
</dbReference>
<dbReference type="CDD" id="cd16262">
    <property type="entry name" value="EFG_III"/>
    <property type="match status" value="1"/>
</dbReference>
<dbReference type="CDD" id="cd01434">
    <property type="entry name" value="EFG_mtEFG1_IV"/>
    <property type="match status" value="1"/>
</dbReference>
<dbReference type="CDD" id="cd03713">
    <property type="entry name" value="EFG_mtEFG_C"/>
    <property type="match status" value="1"/>
</dbReference>
<dbReference type="CDD" id="cd04088">
    <property type="entry name" value="EFG_mtEFG_II"/>
    <property type="match status" value="1"/>
</dbReference>
<dbReference type="FunFam" id="2.40.30.10:FF:000006">
    <property type="entry name" value="Elongation factor G"/>
    <property type="match status" value="1"/>
</dbReference>
<dbReference type="FunFam" id="3.30.230.10:FF:000003">
    <property type="entry name" value="Elongation factor G"/>
    <property type="match status" value="1"/>
</dbReference>
<dbReference type="FunFam" id="3.30.70.240:FF:000001">
    <property type="entry name" value="Elongation factor G"/>
    <property type="match status" value="1"/>
</dbReference>
<dbReference type="FunFam" id="3.30.70.870:FF:000001">
    <property type="entry name" value="Elongation factor G"/>
    <property type="match status" value="1"/>
</dbReference>
<dbReference type="FunFam" id="3.40.50.300:FF:000029">
    <property type="entry name" value="Elongation factor G"/>
    <property type="match status" value="1"/>
</dbReference>
<dbReference type="Gene3D" id="3.30.230.10">
    <property type="match status" value="1"/>
</dbReference>
<dbReference type="Gene3D" id="3.30.70.240">
    <property type="match status" value="1"/>
</dbReference>
<dbReference type="Gene3D" id="3.30.70.870">
    <property type="entry name" value="Elongation Factor G (Translational Gtpase), domain 3"/>
    <property type="match status" value="1"/>
</dbReference>
<dbReference type="Gene3D" id="3.40.50.300">
    <property type="entry name" value="P-loop containing nucleotide triphosphate hydrolases"/>
    <property type="match status" value="1"/>
</dbReference>
<dbReference type="Gene3D" id="2.40.30.10">
    <property type="entry name" value="Translation factors"/>
    <property type="match status" value="1"/>
</dbReference>
<dbReference type="HAMAP" id="MF_00054_B">
    <property type="entry name" value="EF_G_EF_2_B"/>
    <property type="match status" value="1"/>
</dbReference>
<dbReference type="InterPro" id="IPR053905">
    <property type="entry name" value="EF-G-like_DII"/>
</dbReference>
<dbReference type="InterPro" id="IPR041095">
    <property type="entry name" value="EFG_II"/>
</dbReference>
<dbReference type="InterPro" id="IPR009022">
    <property type="entry name" value="EFG_III"/>
</dbReference>
<dbReference type="InterPro" id="IPR035647">
    <property type="entry name" value="EFG_III/V"/>
</dbReference>
<dbReference type="InterPro" id="IPR047872">
    <property type="entry name" value="EFG_IV"/>
</dbReference>
<dbReference type="InterPro" id="IPR035649">
    <property type="entry name" value="EFG_V"/>
</dbReference>
<dbReference type="InterPro" id="IPR000640">
    <property type="entry name" value="EFG_V-like"/>
</dbReference>
<dbReference type="InterPro" id="IPR031157">
    <property type="entry name" value="G_TR_CS"/>
</dbReference>
<dbReference type="InterPro" id="IPR027417">
    <property type="entry name" value="P-loop_NTPase"/>
</dbReference>
<dbReference type="InterPro" id="IPR020568">
    <property type="entry name" value="Ribosomal_Su5_D2-typ_SF"/>
</dbReference>
<dbReference type="InterPro" id="IPR014721">
    <property type="entry name" value="Ribsml_uS5_D2-typ_fold_subgr"/>
</dbReference>
<dbReference type="InterPro" id="IPR005225">
    <property type="entry name" value="Small_GTP-bd"/>
</dbReference>
<dbReference type="InterPro" id="IPR000795">
    <property type="entry name" value="T_Tr_GTP-bd_dom"/>
</dbReference>
<dbReference type="InterPro" id="IPR009000">
    <property type="entry name" value="Transl_B-barrel_sf"/>
</dbReference>
<dbReference type="InterPro" id="IPR004540">
    <property type="entry name" value="Transl_elong_EFG/EF2"/>
</dbReference>
<dbReference type="InterPro" id="IPR005517">
    <property type="entry name" value="Transl_elong_EFG/EF2_IV"/>
</dbReference>
<dbReference type="NCBIfam" id="TIGR00484">
    <property type="entry name" value="EF-G"/>
    <property type="match status" value="1"/>
</dbReference>
<dbReference type="NCBIfam" id="NF009381">
    <property type="entry name" value="PRK12740.1-5"/>
    <property type="match status" value="1"/>
</dbReference>
<dbReference type="NCBIfam" id="TIGR00231">
    <property type="entry name" value="small_GTP"/>
    <property type="match status" value="1"/>
</dbReference>
<dbReference type="PANTHER" id="PTHR43261:SF1">
    <property type="entry name" value="RIBOSOME-RELEASING FACTOR 2, MITOCHONDRIAL"/>
    <property type="match status" value="1"/>
</dbReference>
<dbReference type="PANTHER" id="PTHR43261">
    <property type="entry name" value="TRANSLATION ELONGATION FACTOR G-RELATED"/>
    <property type="match status" value="1"/>
</dbReference>
<dbReference type="Pfam" id="PF22042">
    <property type="entry name" value="EF-G_D2"/>
    <property type="match status" value="1"/>
</dbReference>
<dbReference type="Pfam" id="PF00679">
    <property type="entry name" value="EFG_C"/>
    <property type="match status" value="1"/>
</dbReference>
<dbReference type="Pfam" id="PF14492">
    <property type="entry name" value="EFG_III"/>
    <property type="match status" value="1"/>
</dbReference>
<dbReference type="Pfam" id="PF03764">
    <property type="entry name" value="EFG_IV"/>
    <property type="match status" value="1"/>
</dbReference>
<dbReference type="Pfam" id="PF00009">
    <property type="entry name" value="GTP_EFTU"/>
    <property type="match status" value="1"/>
</dbReference>
<dbReference type="PRINTS" id="PR00315">
    <property type="entry name" value="ELONGATNFCT"/>
</dbReference>
<dbReference type="SMART" id="SM00838">
    <property type="entry name" value="EFG_C"/>
    <property type="match status" value="1"/>
</dbReference>
<dbReference type="SMART" id="SM00889">
    <property type="entry name" value="EFG_IV"/>
    <property type="match status" value="1"/>
</dbReference>
<dbReference type="SUPFAM" id="SSF54980">
    <property type="entry name" value="EF-G C-terminal domain-like"/>
    <property type="match status" value="2"/>
</dbReference>
<dbReference type="SUPFAM" id="SSF52540">
    <property type="entry name" value="P-loop containing nucleoside triphosphate hydrolases"/>
    <property type="match status" value="1"/>
</dbReference>
<dbReference type="SUPFAM" id="SSF54211">
    <property type="entry name" value="Ribosomal protein S5 domain 2-like"/>
    <property type="match status" value="1"/>
</dbReference>
<dbReference type="SUPFAM" id="SSF50447">
    <property type="entry name" value="Translation proteins"/>
    <property type="match status" value="1"/>
</dbReference>
<dbReference type="PROSITE" id="PS00301">
    <property type="entry name" value="G_TR_1"/>
    <property type="match status" value="1"/>
</dbReference>
<dbReference type="PROSITE" id="PS51722">
    <property type="entry name" value="G_TR_2"/>
    <property type="match status" value="1"/>
</dbReference>
<proteinExistence type="inferred from homology"/>
<comment type="function">
    <text evidence="1">Catalyzes the GTP-dependent ribosomal translocation step during translation elongation. During this step, the ribosome changes from the pre-translocational (PRE) to the post-translocational (POST) state as the newly formed A-site-bound peptidyl-tRNA and P-site-bound deacylated tRNA move to the P and E sites, respectively. Catalyzes the coordinated movement of the two tRNA molecules, the mRNA and conformational changes in the ribosome.</text>
</comment>
<comment type="subcellular location">
    <subcellularLocation>
        <location evidence="1">Cytoplasm</location>
    </subcellularLocation>
</comment>
<comment type="similarity">
    <text evidence="1">Belongs to the TRAFAC class translation factor GTPase superfamily. Classic translation factor GTPase family. EF-G/EF-2 subfamily.</text>
</comment>